<reference key="1">
    <citation type="journal article" date="2008" name="J. Virol.">
        <title>Group A human rotavirus genomics: evidence that gene constellations are influenced by viral protein interactions.</title>
        <authorList>
            <person name="Heiman E.M."/>
            <person name="McDonald S.M."/>
            <person name="Barro M."/>
            <person name="Taraporewala Z.F."/>
            <person name="Bar-Magen T."/>
            <person name="Patton J.T."/>
        </authorList>
    </citation>
    <scope>NUCLEOTIDE SEQUENCE [GENOMIC RNA]</scope>
</reference>
<evidence type="ECO:0000255" key="1">
    <source>
        <dbReference type="HAMAP-Rule" id="MF_04088"/>
    </source>
</evidence>
<dbReference type="EMBL" id="EF672599">
    <property type="protein sequence ID" value="ABV53277.1"/>
    <property type="molecule type" value="Genomic_RNA"/>
</dbReference>
<dbReference type="Proteomes" id="UP000007047">
    <property type="component" value="Genome"/>
</dbReference>
<dbReference type="GO" id="GO:0030430">
    <property type="term" value="C:host cell cytoplasm"/>
    <property type="evidence" value="ECO:0007669"/>
    <property type="project" value="UniProtKB-UniRule"/>
</dbReference>
<dbReference type="GO" id="GO:0044163">
    <property type="term" value="C:host cytoskeleton"/>
    <property type="evidence" value="ECO:0007669"/>
    <property type="project" value="UniProtKB-SubCell"/>
</dbReference>
<dbReference type="GO" id="GO:0046872">
    <property type="term" value="F:metal ion binding"/>
    <property type="evidence" value="ECO:0007669"/>
    <property type="project" value="UniProtKB-UniRule"/>
</dbReference>
<dbReference type="GO" id="GO:0003723">
    <property type="term" value="F:RNA binding"/>
    <property type="evidence" value="ECO:0007669"/>
    <property type="project" value="UniProtKB-UniRule"/>
</dbReference>
<dbReference type="GO" id="GO:0039548">
    <property type="term" value="P:symbiont-mediated suppression of host cytoplasmic pattern recognition receptor signaling pathway via inhibition of IRF3 activity"/>
    <property type="evidence" value="ECO:0007669"/>
    <property type="project" value="UniProtKB-UniRule"/>
</dbReference>
<dbReference type="GO" id="GO:0039557">
    <property type="term" value="P:symbiont-mediated suppression of host cytoplasmic pattern recognition receptor signaling pathway via inhibition of IRF7 activity"/>
    <property type="evidence" value="ECO:0007669"/>
    <property type="project" value="UniProtKB-UniRule"/>
</dbReference>
<dbReference type="GO" id="GO:0085034">
    <property type="term" value="P:symbiont-mediated suppression of host NF-kappaB cascade"/>
    <property type="evidence" value="ECO:0007669"/>
    <property type="project" value="UniProtKB-UniRule"/>
</dbReference>
<dbReference type="HAMAP" id="MF_04088">
    <property type="entry name" value="ROTA_NSP1"/>
    <property type="match status" value="1"/>
</dbReference>
<dbReference type="InterPro" id="IPR002148">
    <property type="entry name" value="Rotavirus_NSP1"/>
</dbReference>
<dbReference type="Pfam" id="PF00981">
    <property type="entry name" value="Rota_NS53"/>
    <property type="match status" value="1"/>
</dbReference>
<comment type="function">
    <text evidence="1">Plays a role in the inhibition of host innate immunity by inducing the degradation of key host factors required to activate interferon production such as IRF3, IRF5 or IRF7. Associates with components of cullin RING ligases (CRLs) including CUL1 or CUL3, which are essential multisubunit ubiquitination complexes, to modulate their activities. Recognizes the host NF-kappa-B regulator BTRC through the presence of a DSGXS motif in the C-terminal substrate recognition domain.</text>
</comment>
<comment type="subunit">
    <text evidence="1">Interacts (via C-terminus) with host IRF3; this interaction leads to IRF3 degradation. Interacts with host IRF7; this interaction leads to IRF7 degradation. Interacts with host CUL1 and CUL3. Interacts with host BTRC.</text>
</comment>
<comment type="subcellular location">
    <subcellularLocation>
        <location evidence="1">Host cytoplasm</location>
        <location evidence="1">Host cytoskeleton</location>
    </subcellularLocation>
</comment>
<comment type="domain">
    <text evidence="1">The integrity of the zinc-binding domain in NSP1 is important for degradation of host IRF3.</text>
</comment>
<comment type="domain">
    <text evidence="1">The pLxIS motif targets host IRF3 for degradation; however phosphorylation of NSP1 pLxIS motif is not required for its activity.</text>
</comment>
<comment type="PTM">
    <text evidence="1">The C-terminal region is phosphorylated by host CKII/CSNK2A1. Phosphorylation of the DSGXS motif is essential for host NF-kappa-B inhibition.</text>
</comment>
<comment type="similarity">
    <text evidence="1">Belongs to the rotavirus NSP1 family.</text>
</comment>
<feature type="chain" id="PRO_0000369088" description="Non-structural protein 1">
    <location>
        <begin position="1"/>
        <end position="486"/>
    </location>
</feature>
<feature type="region of interest" description="RNA-binding" evidence="1">
    <location>
        <begin position="1"/>
        <end position="81"/>
    </location>
</feature>
<feature type="region of interest" description="Zinc-binding domain" evidence="1">
    <location>
        <begin position="42"/>
        <end position="79"/>
    </location>
</feature>
<feature type="region of interest" description="Important for cytoskeleton localization" evidence="1">
    <location>
        <begin position="82"/>
        <end position="176"/>
    </location>
</feature>
<feature type="region of interest" description="Interaction with host IRF3" evidence="1">
    <location>
        <begin position="317"/>
        <end position="486"/>
    </location>
</feature>
<feature type="short sequence motif" description="IKBKB-like degron (ILD) motif" evidence="1">
    <location>
        <begin position="479"/>
        <end position="483"/>
    </location>
</feature>
<feature type="short sequence motif" description="pLxIS motif" evidence="1">
    <location>
        <begin position="480"/>
        <end position="483"/>
    </location>
</feature>
<accession>B3SRV2</accession>
<organismHost>
    <name type="scientific">Homo sapiens</name>
    <name type="common">Human</name>
    <dbReference type="NCBI Taxonomy" id="9606"/>
</organismHost>
<proteinExistence type="inferred from homology"/>
<keyword id="KW-1035">Host cytoplasm</keyword>
<keyword id="KW-1037">Host cytoskeleton</keyword>
<keyword id="KW-0945">Host-virus interaction</keyword>
<keyword id="KW-1090">Inhibition of host innate immune response by virus</keyword>
<keyword id="KW-1092">Inhibition of host IRF3 by virus</keyword>
<keyword id="KW-1093">Inhibition of host IRF7 by virus</keyword>
<keyword id="KW-1100">Inhibition of host NF-kappa-B by virus</keyword>
<keyword id="KW-1113">Inhibition of host RLR pathway by virus</keyword>
<keyword id="KW-0922">Interferon antiviral system evasion</keyword>
<keyword id="KW-0479">Metal-binding</keyword>
<keyword id="KW-0597">Phosphoprotein</keyword>
<keyword id="KW-0694">RNA-binding</keyword>
<keyword id="KW-0899">Viral immunoevasion</keyword>
<name>NSP1_ROTHP</name>
<organism>
    <name type="scientific">Rotavirus A (strain RVA/Human/United States/P/1974/G3P1A[8])</name>
    <name type="common">RV-A</name>
    <dbReference type="NCBI Taxonomy" id="10957"/>
    <lineage>
        <taxon>Viruses</taxon>
        <taxon>Riboviria</taxon>
        <taxon>Orthornavirae</taxon>
        <taxon>Duplornaviricota</taxon>
        <taxon>Resentoviricetes</taxon>
        <taxon>Reovirales</taxon>
        <taxon>Sedoreoviridae</taxon>
        <taxon>Rotavirus</taxon>
        <taxon>Rotavirus A</taxon>
    </lineage>
</organism>
<protein>
    <recommendedName>
        <fullName evidence="1">Non-structural protein 1</fullName>
        <shortName evidence="1">NSP1</shortName>
    </recommendedName>
    <alternativeName>
        <fullName evidence="1">NCVP2</fullName>
    </alternativeName>
    <alternativeName>
        <fullName evidence="1">Non-structural RNA-binding protein 53</fullName>
        <shortName evidence="1">NS53</shortName>
    </alternativeName>
</protein>
<sequence>MATFKDACYHYKRINKLNHTVLKLGVNDTWRSSPPTKYKGWCLDCCQHTDLTYCRGCTMYHVCQWCSQYGRCFLDNEPHLLRMRTFKNEVTKDDLKNLIDMYEILFPMNQKIVCRFINNTRQHKCRNECMTQWYNHLLLPITLQSMSIELDGDVYYVFGYYDNMNSINQTPFSFTNLVDIYDKLLLDDVNFARMSFLPASLQQEYALRYFSKSRFISEQRKCVNDSHFSINVLENLHNPSFKVQITRNCSELSFDWNEACKLVKNVSAYFDMLKTSHIEFYSVSTRCRIFTQCKLKMASKLIKPNYITSNHKTLATEVHNCKWCSVNNSYTVWNDFRIKKIYDNIFNFLRALVKSNVNIGHCSSQEKIYEYVEDVLNVCDDERWKTSIMEIFNCLEPVELDDVKYVLFNHEINWDVINVLVHSIGKVPQILTLENVITIMQSIIYEWFDIRYMRNTPMVTFTIDKLRRLHTGLKTVEYDSGISDIE</sequence>